<feature type="chain" id="PRO_0000350865" description="Scarecrow-like protein 28">
    <location>
        <begin position="1"/>
        <end position="658"/>
    </location>
</feature>
<feature type="domain" description="GRAS" evidence="2">
    <location>
        <begin position="265"/>
        <end position="654"/>
    </location>
</feature>
<feature type="region of interest" description="Disordered" evidence="3">
    <location>
        <begin position="43"/>
        <end position="85"/>
    </location>
</feature>
<feature type="region of interest" description="Disordered" evidence="3">
    <location>
        <begin position="96"/>
        <end position="115"/>
    </location>
</feature>
<feature type="region of interest" description="Disordered" evidence="3">
    <location>
        <begin position="209"/>
        <end position="265"/>
    </location>
</feature>
<feature type="region of interest" description="Leucine repeat I (LRI)" evidence="2">
    <location>
        <begin position="272"/>
        <end position="336"/>
    </location>
</feature>
<feature type="region of interest" description="VHIID" evidence="2">
    <location>
        <begin position="355"/>
        <end position="420"/>
    </location>
</feature>
<feature type="region of interest" description="Leucine repeat II (LRII)" evidence="2">
    <location>
        <begin position="430"/>
        <end position="462"/>
    </location>
</feature>
<feature type="region of interest" description="PFYRE" evidence="2">
    <location>
        <begin position="471"/>
        <end position="563"/>
    </location>
</feature>
<feature type="region of interest" description="SAW" evidence="2">
    <location>
        <begin position="566"/>
        <end position="654"/>
    </location>
</feature>
<feature type="short sequence motif" description="VHIID" evidence="2">
    <location>
        <begin position="386"/>
        <end position="390"/>
    </location>
</feature>
<feature type="compositionally biased region" description="Low complexity" evidence="3">
    <location>
        <begin position="214"/>
        <end position="228"/>
    </location>
</feature>
<protein>
    <recommendedName>
        <fullName>Scarecrow-like protein 28</fullName>
        <shortName>AtSCL28</shortName>
    </recommendedName>
    <alternativeName>
        <fullName>GRAS family protein 8</fullName>
        <shortName>AtGRAS-8</shortName>
    </alternativeName>
</protein>
<dbReference type="EMBL" id="AC010795">
    <property type="protein sequence ID" value="AAG51600.1"/>
    <property type="molecule type" value="Genomic_DNA"/>
</dbReference>
<dbReference type="EMBL" id="CP002684">
    <property type="protein sequence ID" value="ANM59206.1"/>
    <property type="molecule type" value="Genomic_DNA"/>
</dbReference>
<dbReference type="PIR" id="D96656">
    <property type="entry name" value="D96656"/>
</dbReference>
<dbReference type="RefSeq" id="NP_176498.1">
    <property type="nucleotide sequence ID" value="NM_104988.2"/>
</dbReference>
<dbReference type="SMR" id="Q9CAN3"/>
<dbReference type="BioGRID" id="27834">
    <property type="interactions" value="7"/>
</dbReference>
<dbReference type="FunCoup" id="Q9CAN3">
    <property type="interactions" value="458"/>
</dbReference>
<dbReference type="STRING" id="3702.Q9CAN3"/>
<dbReference type="iPTMnet" id="Q9CAN3"/>
<dbReference type="PaxDb" id="3702-AT1G63100.1"/>
<dbReference type="EnsemblPlants" id="AT1G63100.2">
    <property type="protein sequence ID" value="AT1G63100.2"/>
    <property type="gene ID" value="AT1G63100"/>
</dbReference>
<dbReference type="GeneID" id="842613"/>
<dbReference type="Gramene" id="AT1G63100.2">
    <property type="protein sequence ID" value="AT1G63100.2"/>
    <property type="gene ID" value="AT1G63100"/>
</dbReference>
<dbReference type="KEGG" id="ath:AT1G63100"/>
<dbReference type="Araport" id="AT1G63100"/>
<dbReference type="TAIR" id="AT1G63100"/>
<dbReference type="eggNOG" id="ENOG502QU5D">
    <property type="taxonomic scope" value="Eukaryota"/>
</dbReference>
<dbReference type="HOGENOM" id="CLU_016521_0_0_1"/>
<dbReference type="InParanoid" id="Q9CAN3"/>
<dbReference type="PhylomeDB" id="Q9CAN3"/>
<dbReference type="CD-CODE" id="9A8A194B">
    <property type="entry name" value="Nuclear speckle"/>
</dbReference>
<dbReference type="PRO" id="PR:Q9CAN3"/>
<dbReference type="Proteomes" id="UP000006548">
    <property type="component" value="Chromosome 1"/>
</dbReference>
<dbReference type="ExpressionAtlas" id="Q9CAN3">
    <property type="expression patterns" value="baseline and differential"/>
</dbReference>
<dbReference type="GO" id="GO:0005634">
    <property type="term" value="C:nucleus"/>
    <property type="evidence" value="ECO:0007669"/>
    <property type="project" value="UniProtKB-SubCell"/>
</dbReference>
<dbReference type="GO" id="GO:0003700">
    <property type="term" value="F:DNA-binding transcription factor activity"/>
    <property type="evidence" value="ECO:0000250"/>
    <property type="project" value="TAIR"/>
</dbReference>
<dbReference type="GO" id="GO:1900459">
    <property type="term" value="P:positive regulation of brassinosteroid mediated signaling pathway"/>
    <property type="evidence" value="ECO:0007669"/>
    <property type="project" value="EnsemblPlants"/>
</dbReference>
<dbReference type="GO" id="GO:0006355">
    <property type="term" value="P:regulation of DNA-templated transcription"/>
    <property type="evidence" value="ECO:0000304"/>
    <property type="project" value="TAIR"/>
</dbReference>
<dbReference type="GO" id="GO:0007346">
    <property type="term" value="P:regulation of mitotic cell cycle"/>
    <property type="evidence" value="ECO:0000314"/>
    <property type="project" value="TAIR"/>
</dbReference>
<dbReference type="InterPro" id="IPR005202">
    <property type="entry name" value="TF_GRAS"/>
</dbReference>
<dbReference type="PANTHER" id="PTHR31636">
    <property type="entry name" value="OSJNBA0084A10.13 PROTEIN-RELATED"/>
    <property type="match status" value="1"/>
</dbReference>
<dbReference type="Pfam" id="PF03514">
    <property type="entry name" value="GRAS"/>
    <property type="match status" value="1"/>
</dbReference>
<dbReference type="PROSITE" id="PS50985">
    <property type="entry name" value="GRAS"/>
    <property type="match status" value="1"/>
</dbReference>
<name>SCL28_ARATH</name>
<comment type="function">
    <text evidence="1">Probable transcription factor involved in plant development.</text>
</comment>
<comment type="subunit">
    <text evidence="4 5">Interacts with SNRNP35 and CYP95.</text>
</comment>
<comment type="subcellular location">
    <subcellularLocation>
        <location evidence="6">Nucleus</location>
    </subcellularLocation>
</comment>
<comment type="tissue specificity">
    <text evidence="6">Expressed in roots and sepals.</text>
</comment>
<comment type="similarity">
    <text evidence="7">Belongs to the GRAS family.</text>
</comment>
<organism>
    <name type="scientific">Arabidopsis thaliana</name>
    <name type="common">Mouse-ear cress</name>
    <dbReference type="NCBI Taxonomy" id="3702"/>
    <lineage>
        <taxon>Eukaryota</taxon>
        <taxon>Viridiplantae</taxon>
        <taxon>Streptophyta</taxon>
        <taxon>Embryophyta</taxon>
        <taxon>Tracheophyta</taxon>
        <taxon>Spermatophyta</taxon>
        <taxon>Magnoliopsida</taxon>
        <taxon>eudicotyledons</taxon>
        <taxon>Gunneridae</taxon>
        <taxon>Pentapetalae</taxon>
        <taxon>rosids</taxon>
        <taxon>malvids</taxon>
        <taxon>Brassicales</taxon>
        <taxon>Brassicaceae</taxon>
        <taxon>Camelineae</taxon>
        <taxon>Arabidopsis</taxon>
    </lineage>
</organism>
<gene>
    <name type="primary">SCL28</name>
    <name type="ordered locus">At1g63100</name>
    <name type="ORF">F16M19.21</name>
</gene>
<accession>Q9CAN3</accession>
<reference key="1">
    <citation type="journal article" date="2000" name="Nature">
        <title>Sequence and analysis of chromosome 1 of the plant Arabidopsis thaliana.</title>
        <authorList>
            <person name="Theologis A."/>
            <person name="Ecker J.R."/>
            <person name="Palm C.J."/>
            <person name="Federspiel N.A."/>
            <person name="Kaul S."/>
            <person name="White O."/>
            <person name="Alonso J."/>
            <person name="Altafi H."/>
            <person name="Araujo R."/>
            <person name="Bowman C.L."/>
            <person name="Brooks S.Y."/>
            <person name="Buehler E."/>
            <person name="Chan A."/>
            <person name="Chao Q."/>
            <person name="Chen H."/>
            <person name="Cheuk R.F."/>
            <person name="Chin C.W."/>
            <person name="Chung M.K."/>
            <person name="Conn L."/>
            <person name="Conway A.B."/>
            <person name="Conway A.R."/>
            <person name="Creasy T.H."/>
            <person name="Dewar K."/>
            <person name="Dunn P."/>
            <person name="Etgu P."/>
            <person name="Feldblyum T.V."/>
            <person name="Feng J.-D."/>
            <person name="Fong B."/>
            <person name="Fujii C.Y."/>
            <person name="Gill J.E."/>
            <person name="Goldsmith A.D."/>
            <person name="Haas B."/>
            <person name="Hansen N.F."/>
            <person name="Hughes B."/>
            <person name="Huizar L."/>
            <person name="Hunter J.L."/>
            <person name="Jenkins J."/>
            <person name="Johnson-Hopson C."/>
            <person name="Khan S."/>
            <person name="Khaykin E."/>
            <person name="Kim C.J."/>
            <person name="Koo H.L."/>
            <person name="Kremenetskaia I."/>
            <person name="Kurtz D.B."/>
            <person name="Kwan A."/>
            <person name="Lam B."/>
            <person name="Langin-Hooper S."/>
            <person name="Lee A."/>
            <person name="Lee J.M."/>
            <person name="Lenz C.A."/>
            <person name="Li J.H."/>
            <person name="Li Y.-P."/>
            <person name="Lin X."/>
            <person name="Liu S.X."/>
            <person name="Liu Z.A."/>
            <person name="Luros J.S."/>
            <person name="Maiti R."/>
            <person name="Marziali A."/>
            <person name="Militscher J."/>
            <person name="Miranda M."/>
            <person name="Nguyen M."/>
            <person name="Nierman W.C."/>
            <person name="Osborne B.I."/>
            <person name="Pai G."/>
            <person name="Peterson J."/>
            <person name="Pham P.K."/>
            <person name="Rizzo M."/>
            <person name="Rooney T."/>
            <person name="Rowley D."/>
            <person name="Sakano H."/>
            <person name="Salzberg S.L."/>
            <person name="Schwartz J.R."/>
            <person name="Shinn P."/>
            <person name="Southwick A.M."/>
            <person name="Sun H."/>
            <person name="Tallon L.J."/>
            <person name="Tambunga G."/>
            <person name="Toriumi M.J."/>
            <person name="Town C.D."/>
            <person name="Utterback T."/>
            <person name="Van Aken S."/>
            <person name="Vaysberg M."/>
            <person name="Vysotskaia V.S."/>
            <person name="Walker M."/>
            <person name="Wu D."/>
            <person name="Yu G."/>
            <person name="Fraser C.M."/>
            <person name="Venter J.C."/>
            <person name="Davis R.W."/>
        </authorList>
    </citation>
    <scope>NUCLEOTIDE SEQUENCE [LARGE SCALE GENOMIC DNA]</scope>
    <source>
        <strain>cv. Columbia</strain>
    </source>
</reference>
<reference key="2">
    <citation type="journal article" date="2017" name="Plant J.">
        <title>Araport11: a complete reannotation of the Arabidopsis thaliana reference genome.</title>
        <authorList>
            <person name="Cheng C.Y."/>
            <person name="Krishnakumar V."/>
            <person name="Chan A.P."/>
            <person name="Thibaud-Nissen F."/>
            <person name="Schobel S."/>
            <person name="Town C.D."/>
        </authorList>
    </citation>
    <scope>GENOME REANNOTATION</scope>
    <source>
        <strain>cv. Columbia</strain>
    </source>
</reference>
<reference key="3">
    <citation type="journal article" date="2004" name="J. Biol. Chem.">
        <title>Interactions of Arabidopsis RS domain containing cyclophilins with SR proteins and U1 and U11 small nuclear ribonucleoprotein-specific proteins suggest their involvement in pre-mRNA Splicing.</title>
        <authorList>
            <person name="Lorkovic Z.J."/>
            <person name="Lopato S."/>
            <person name="Pexa M."/>
            <person name="Lehner R."/>
            <person name="Barta A."/>
        </authorList>
    </citation>
    <scope>INTERACTION WITH CYP95</scope>
</reference>
<reference key="4">
    <citation type="journal article" date="2004" name="Plant Mol. Biol.">
        <title>Genome-wide analysis of the GRAS gene family in rice and Arabidopsis.</title>
        <authorList>
            <person name="Tian C."/>
            <person name="Wan P."/>
            <person name="Sun S."/>
            <person name="Li J."/>
            <person name="Chen M."/>
        </authorList>
    </citation>
    <scope>GENE FAMILY</scope>
</reference>
<reference key="5">
    <citation type="journal article" date="2005" name="RNA">
        <title>Evolutionary conservation of minor U12-type spliceosome between plants and humans.</title>
        <authorList>
            <person name="Lorkovic Z.J."/>
            <person name="Lehner R."/>
            <person name="Forstner C."/>
            <person name="Barta A."/>
        </authorList>
    </citation>
    <scope>INTERACTION WITH SNRNP35</scope>
</reference>
<reference key="6">
    <citation type="journal article" date="2008" name="Plant Mol. Biol.">
        <title>Large-scale analysis of the GRAS gene family in Arabidopsis thaliana.</title>
        <authorList>
            <person name="Lee M.-H."/>
            <person name="Kim B."/>
            <person name="Song S.-K."/>
            <person name="Heo J.-O."/>
            <person name="Yu N.-I."/>
            <person name="Lee S.A."/>
            <person name="Kim M."/>
            <person name="Kim D.G."/>
            <person name="Sohn S.O."/>
            <person name="Lim C.E."/>
            <person name="Chang K.S."/>
            <person name="Lee M.M."/>
            <person name="Lim J."/>
        </authorList>
    </citation>
    <scope>GENE FAMILY</scope>
    <scope>SUBCELLULAR LOCATION</scope>
    <scope>TISSUE SPECIFICITY</scope>
</reference>
<keyword id="KW-0539">Nucleus</keyword>
<keyword id="KW-1185">Reference proteome</keyword>
<keyword id="KW-0804">Transcription</keyword>
<keyword id="KW-0805">Transcription regulation</keyword>
<evidence type="ECO:0000250" key="1"/>
<evidence type="ECO:0000255" key="2">
    <source>
        <dbReference type="PROSITE-ProRule" id="PRU01191"/>
    </source>
</evidence>
<evidence type="ECO:0000256" key="3">
    <source>
        <dbReference type="SAM" id="MobiDB-lite"/>
    </source>
</evidence>
<evidence type="ECO:0000269" key="4">
    <source>
    </source>
</evidence>
<evidence type="ECO:0000269" key="5">
    <source>
    </source>
</evidence>
<evidence type="ECO:0000269" key="6">
    <source>
    </source>
</evidence>
<evidence type="ECO:0000305" key="7"/>
<sequence length="658" mass="73481">MLAGCSSSSLLSPTRRLRSEAVAATSATVSAHFPMNTQRLDLPCSSSFSRKETPSSRPLGRSISLDNSNNNNNKPIERKTKTSGCSLKQNIKLPPLATTRGNGEGFSWNNDNNNRGKSLKRLAEEDESCLSRAKRTKCENEGGFWFEHFTGQDSSSPALPFSLTCSGDDEEKVCFVPSEVISQPLPNWVDSVITELAGIGDKDVESSLPAAVKEASGGSSTSASSESRSLSHRVPEPTNGSRNPYSHRGATEERTTGNINNNNNRNDLQRDFELVNLLTGCLDAIRSRNIAAINHFIARTGDLASPRGRTPMTRLIAYYIEALALRVARMWPHIFHIAPPREFDRTVEDESGNALRFLNQVTPIPKFIHFTANEMLLRAFEGKERVHIIDFDIKQGLQWPSFFQSLASRINPPHHVRITGIGESKLELNETGDRLHGFAEAMNLQFEFHPVVDRLEDVRLWMLHVKEGESVAVNCVMQMHKTLYDGTGAAIRDFLGLIRSTNPIALVLAEQEAEHNSEQLETRVCNSLKYYSAMFDAIHTNLATDSLMRVKVEEMLFGREIRNIVACEGSHRQERHVGFRHWRRMLEQLGFRSLGVSEREVLQSKMLLRMYGSDNEGFFNVERSDEDNGGEGGRGGGVTLRWSEQPLYTISAWTTGGN</sequence>
<proteinExistence type="evidence at protein level"/>